<organism>
    <name type="scientific">Mycolicibacterium vanbaalenii (strain DSM 7251 / JCM 13017 / BCRC 16820 / KCTC 9966 / NRRL B-24157 / PYR-1)</name>
    <name type="common">Mycobacterium vanbaalenii</name>
    <dbReference type="NCBI Taxonomy" id="350058"/>
    <lineage>
        <taxon>Bacteria</taxon>
        <taxon>Bacillati</taxon>
        <taxon>Actinomycetota</taxon>
        <taxon>Actinomycetes</taxon>
        <taxon>Mycobacteriales</taxon>
        <taxon>Mycobacteriaceae</taxon>
        <taxon>Mycolicibacterium</taxon>
    </lineage>
</organism>
<reference key="1">
    <citation type="submission" date="2006-12" db="EMBL/GenBank/DDBJ databases">
        <title>Complete sequence of Mycobacterium vanbaalenii PYR-1.</title>
        <authorList>
            <consortium name="US DOE Joint Genome Institute"/>
            <person name="Copeland A."/>
            <person name="Lucas S."/>
            <person name="Lapidus A."/>
            <person name="Barry K."/>
            <person name="Detter J.C."/>
            <person name="Glavina del Rio T."/>
            <person name="Hammon N."/>
            <person name="Israni S."/>
            <person name="Dalin E."/>
            <person name="Tice H."/>
            <person name="Pitluck S."/>
            <person name="Singan V."/>
            <person name="Schmutz J."/>
            <person name="Larimer F."/>
            <person name="Land M."/>
            <person name="Hauser L."/>
            <person name="Kyrpides N."/>
            <person name="Anderson I.J."/>
            <person name="Miller C."/>
            <person name="Richardson P."/>
        </authorList>
    </citation>
    <scope>NUCLEOTIDE SEQUENCE [LARGE SCALE GENOMIC DNA]</scope>
    <source>
        <strain>DSM 7251 / JCM 13017 / BCRC 16820 / KCTC 9966 / NRRL B-24157 / PYR-1</strain>
    </source>
</reference>
<proteinExistence type="inferred from homology"/>
<feature type="chain" id="PRO_1000066014" description="Alanine racemase">
    <location>
        <begin position="1"/>
        <end position="390"/>
    </location>
</feature>
<feature type="active site" description="Proton acceptor; specific for D-alanine" evidence="1">
    <location>
        <position position="46"/>
    </location>
</feature>
<feature type="active site" description="Proton acceptor; specific for L-alanine" evidence="1">
    <location>
        <position position="275"/>
    </location>
</feature>
<feature type="binding site" evidence="1">
    <location>
        <position position="144"/>
    </location>
    <ligand>
        <name>substrate</name>
    </ligand>
</feature>
<feature type="binding site" evidence="1">
    <location>
        <position position="323"/>
    </location>
    <ligand>
        <name>substrate</name>
    </ligand>
</feature>
<feature type="modified residue" description="N6-(pyridoxal phosphate)lysine" evidence="1">
    <location>
        <position position="46"/>
    </location>
</feature>
<comment type="function">
    <text evidence="1">Catalyzes the interconversion of L-alanine and D-alanine. May also act on other amino acids.</text>
</comment>
<comment type="catalytic activity">
    <reaction evidence="1">
        <text>L-alanine = D-alanine</text>
        <dbReference type="Rhea" id="RHEA:20249"/>
        <dbReference type="ChEBI" id="CHEBI:57416"/>
        <dbReference type="ChEBI" id="CHEBI:57972"/>
        <dbReference type="EC" id="5.1.1.1"/>
    </reaction>
</comment>
<comment type="cofactor">
    <cofactor evidence="1">
        <name>pyridoxal 5'-phosphate</name>
        <dbReference type="ChEBI" id="CHEBI:597326"/>
    </cofactor>
</comment>
<comment type="pathway">
    <text evidence="1">Amino-acid biosynthesis; D-alanine biosynthesis; D-alanine from L-alanine: step 1/1.</text>
</comment>
<comment type="similarity">
    <text evidence="1">Belongs to the alanine racemase family.</text>
</comment>
<accession>A1T566</accession>
<gene>
    <name type="primary">alr</name>
    <name type="ordered locus">Mvan_1484</name>
</gene>
<dbReference type="EC" id="5.1.1.1" evidence="1"/>
<dbReference type="EMBL" id="CP000511">
    <property type="protein sequence ID" value="ABM12316.1"/>
    <property type="molecule type" value="Genomic_DNA"/>
</dbReference>
<dbReference type="SMR" id="A1T566"/>
<dbReference type="STRING" id="350058.Mvan_1484"/>
<dbReference type="KEGG" id="mva:Mvan_1484"/>
<dbReference type="eggNOG" id="COG0787">
    <property type="taxonomic scope" value="Bacteria"/>
</dbReference>
<dbReference type="HOGENOM" id="CLU_028393_0_0_11"/>
<dbReference type="UniPathway" id="UPA00042">
    <property type="reaction ID" value="UER00497"/>
</dbReference>
<dbReference type="Proteomes" id="UP000009159">
    <property type="component" value="Chromosome"/>
</dbReference>
<dbReference type="GO" id="GO:0005829">
    <property type="term" value="C:cytosol"/>
    <property type="evidence" value="ECO:0007669"/>
    <property type="project" value="TreeGrafter"/>
</dbReference>
<dbReference type="GO" id="GO:0008784">
    <property type="term" value="F:alanine racemase activity"/>
    <property type="evidence" value="ECO:0007669"/>
    <property type="project" value="UniProtKB-UniRule"/>
</dbReference>
<dbReference type="GO" id="GO:0030170">
    <property type="term" value="F:pyridoxal phosphate binding"/>
    <property type="evidence" value="ECO:0007669"/>
    <property type="project" value="UniProtKB-UniRule"/>
</dbReference>
<dbReference type="GO" id="GO:0030632">
    <property type="term" value="P:D-alanine biosynthetic process"/>
    <property type="evidence" value="ECO:0007669"/>
    <property type="project" value="UniProtKB-UniRule"/>
</dbReference>
<dbReference type="GO" id="GO:0009252">
    <property type="term" value="P:peptidoglycan biosynthetic process"/>
    <property type="evidence" value="ECO:0007669"/>
    <property type="project" value="TreeGrafter"/>
</dbReference>
<dbReference type="CDD" id="cd00430">
    <property type="entry name" value="PLPDE_III_AR"/>
    <property type="match status" value="1"/>
</dbReference>
<dbReference type="FunFam" id="2.40.37.10:FF:000015">
    <property type="entry name" value="Alanine racemase"/>
    <property type="match status" value="1"/>
</dbReference>
<dbReference type="FunFam" id="3.20.20.10:FF:000002">
    <property type="entry name" value="Alanine racemase"/>
    <property type="match status" value="1"/>
</dbReference>
<dbReference type="Gene3D" id="3.20.20.10">
    <property type="entry name" value="Alanine racemase"/>
    <property type="match status" value="1"/>
</dbReference>
<dbReference type="Gene3D" id="2.40.37.10">
    <property type="entry name" value="Lyase, Ornithine Decarboxylase, Chain A, domain 1"/>
    <property type="match status" value="1"/>
</dbReference>
<dbReference type="HAMAP" id="MF_01201">
    <property type="entry name" value="Ala_racemase"/>
    <property type="match status" value="1"/>
</dbReference>
<dbReference type="InterPro" id="IPR000821">
    <property type="entry name" value="Ala_racemase"/>
</dbReference>
<dbReference type="InterPro" id="IPR009006">
    <property type="entry name" value="Ala_racemase/Decarboxylase_C"/>
</dbReference>
<dbReference type="InterPro" id="IPR011079">
    <property type="entry name" value="Ala_racemase_C"/>
</dbReference>
<dbReference type="InterPro" id="IPR001608">
    <property type="entry name" value="Ala_racemase_N"/>
</dbReference>
<dbReference type="InterPro" id="IPR020622">
    <property type="entry name" value="Ala_racemase_pyridoxalP-BS"/>
</dbReference>
<dbReference type="InterPro" id="IPR029066">
    <property type="entry name" value="PLP-binding_barrel"/>
</dbReference>
<dbReference type="NCBIfam" id="TIGR00492">
    <property type="entry name" value="alr"/>
    <property type="match status" value="1"/>
</dbReference>
<dbReference type="PANTHER" id="PTHR30511">
    <property type="entry name" value="ALANINE RACEMASE"/>
    <property type="match status" value="1"/>
</dbReference>
<dbReference type="PANTHER" id="PTHR30511:SF0">
    <property type="entry name" value="ALANINE RACEMASE, CATABOLIC-RELATED"/>
    <property type="match status" value="1"/>
</dbReference>
<dbReference type="Pfam" id="PF00842">
    <property type="entry name" value="Ala_racemase_C"/>
    <property type="match status" value="1"/>
</dbReference>
<dbReference type="Pfam" id="PF01168">
    <property type="entry name" value="Ala_racemase_N"/>
    <property type="match status" value="1"/>
</dbReference>
<dbReference type="PRINTS" id="PR00992">
    <property type="entry name" value="ALARACEMASE"/>
</dbReference>
<dbReference type="SMART" id="SM01005">
    <property type="entry name" value="Ala_racemase_C"/>
    <property type="match status" value="1"/>
</dbReference>
<dbReference type="SUPFAM" id="SSF50621">
    <property type="entry name" value="Alanine racemase C-terminal domain-like"/>
    <property type="match status" value="1"/>
</dbReference>
<dbReference type="SUPFAM" id="SSF51419">
    <property type="entry name" value="PLP-binding barrel"/>
    <property type="match status" value="1"/>
</dbReference>
<dbReference type="PROSITE" id="PS00395">
    <property type="entry name" value="ALANINE_RACEMASE"/>
    <property type="match status" value="1"/>
</dbReference>
<protein>
    <recommendedName>
        <fullName evidence="1">Alanine racemase</fullName>
        <ecNumber evidence="1">5.1.1.1</ecNumber>
    </recommendedName>
</protein>
<keyword id="KW-0413">Isomerase</keyword>
<keyword id="KW-0663">Pyridoxal phosphate</keyword>
<evidence type="ECO:0000255" key="1">
    <source>
        <dbReference type="HAMAP-Rule" id="MF_01201"/>
    </source>
</evidence>
<sequence>MTTTPTMTQKLPQALPTASIDLDAIAHNVAVLREHAGPAAVMAVVKADGYGHGATQVARAALAAGAAELGVATVGEALALRRDGVTARVLAWLHPPGTDFAPALLADVDVAVSSLRQFTDLLDAAGRTGRTADVTVKADTGLSRNGVGEADYPALVDALRRAASDGAVRVRGLMSHLAHGDDPEHPFNDVQARRLTEMAKLAGARGVSYDVVHLSNSPAALTRPDLAFDMVRPGIAVYGQTPIPQRGDFGLRPAMTVKCPVSAVRPVRAGDAVSYGHTWTAQTDTTLALVPAGYADGVFRALSNRFEVSINGRRYPNVGRICMDQFVVDLGPGPVDVAEGDDAILFGPGTDGEPTAQDWAELLDTINYEVVTSPRGRIVRTYVGGKGGPQ</sequence>
<name>ALR_MYCVP</name>